<evidence type="ECO:0000255" key="1">
    <source>
        <dbReference type="HAMAP-Rule" id="MF_01351"/>
    </source>
</evidence>
<geneLocation type="chloroplast"/>
<accession>Q8HVR0</accession>
<comment type="function">
    <text evidence="1">NDH shuttles electrons from NAD(P)H:plastoquinone, via FMN and iron-sulfur (Fe-S) centers, to quinones in the photosynthetic chain and possibly in a chloroplast respiratory chain. The immediate electron acceptor for the enzyme in this species is believed to be plastoquinone. Couples the redox reaction to proton translocation, and thus conserves the redox energy in a proton gradient.</text>
</comment>
<comment type="catalytic activity">
    <reaction evidence="1">
        <text>a plastoquinone + NADH + (n+1) H(+)(in) = a plastoquinol + NAD(+) + n H(+)(out)</text>
        <dbReference type="Rhea" id="RHEA:42608"/>
        <dbReference type="Rhea" id="RHEA-COMP:9561"/>
        <dbReference type="Rhea" id="RHEA-COMP:9562"/>
        <dbReference type="ChEBI" id="CHEBI:15378"/>
        <dbReference type="ChEBI" id="CHEBI:17757"/>
        <dbReference type="ChEBI" id="CHEBI:57540"/>
        <dbReference type="ChEBI" id="CHEBI:57945"/>
        <dbReference type="ChEBI" id="CHEBI:62192"/>
    </reaction>
</comment>
<comment type="catalytic activity">
    <reaction evidence="1">
        <text>a plastoquinone + NADPH + (n+1) H(+)(in) = a plastoquinol + NADP(+) + n H(+)(out)</text>
        <dbReference type="Rhea" id="RHEA:42612"/>
        <dbReference type="Rhea" id="RHEA-COMP:9561"/>
        <dbReference type="Rhea" id="RHEA-COMP:9562"/>
        <dbReference type="ChEBI" id="CHEBI:15378"/>
        <dbReference type="ChEBI" id="CHEBI:17757"/>
        <dbReference type="ChEBI" id="CHEBI:57783"/>
        <dbReference type="ChEBI" id="CHEBI:58349"/>
        <dbReference type="ChEBI" id="CHEBI:62192"/>
    </reaction>
</comment>
<comment type="cofactor">
    <cofactor evidence="1">
        <name>[4Fe-4S] cluster</name>
        <dbReference type="ChEBI" id="CHEBI:49883"/>
    </cofactor>
    <text evidence="1">Binds 2 [4Fe-4S] clusters per subunit.</text>
</comment>
<comment type="subunit">
    <text evidence="1">NDH is composed of at least 16 different subunits, 5 of which are encoded in the nucleus.</text>
</comment>
<comment type="subcellular location">
    <subcellularLocation>
        <location evidence="1">Plastid</location>
        <location evidence="1">Chloroplast thylakoid membrane</location>
        <topology evidence="1">Peripheral membrane protein</topology>
    </subcellularLocation>
</comment>
<comment type="similarity">
    <text evidence="1">Belongs to the complex I 23 kDa subunit family.</text>
</comment>
<dbReference type="EC" id="7.1.1.-" evidence="1"/>
<dbReference type="EMBL" id="AF383803">
    <property type="protein sequence ID" value="AAN61744.1"/>
    <property type="molecule type" value="Genomic_DNA"/>
</dbReference>
<dbReference type="RefSeq" id="YP_010719451.1">
    <property type="nucleotide sequence ID" value="NC_072347.1"/>
</dbReference>
<dbReference type="SMR" id="Q8HVR0"/>
<dbReference type="GeneID" id="79136183"/>
<dbReference type="GO" id="GO:0009535">
    <property type="term" value="C:chloroplast thylakoid membrane"/>
    <property type="evidence" value="ECO:0007669"/>
    <property type="project" value="UniProtKB-SubCell"/>
</dbReference>
<dbReference type="GO" id="GO:0051539">
    <property type="term" value="F:4 iron, 4 sulfur cluster binding"/>
    <property type="evidence" value="ECO:0007669"/>
    <property type="project" value="UniProtKB-KW"/>
</dbReference>
<dbReference type="GO" id="GO:0005506">
    <property type="term" value="F:iron ion binding"/>
    <property type="evidence" value="ECO:0007669"/>
    <property type="project" value="UniProtKB-UniRule"/>
</dbReference>
<dbReference type="GO" id="GO:0008137">
    <property type="term" value="F:NADH dehydrogenase (ubiquinone) activity"/>
    <property type="evidence" value="ECO:0007669"/>
    <property type="project" value="InterPro"/>
</dbReference>
<dbReference type="GO" id="GO:0048038">
    <property type="term" value="F:quinone binding"/>
    <property type="evidence" value="ECO:0007669"/>
    <property type="project" value="UniProtKB-KW"/>
</dbReference>
<dbReference type="GO" id="GO:0019684">
    <property type="term" value="P:photosynthesis, light reaction"/>
    <property type="evidence" value="ECO:0007669"/>
    <property type="project" value="UniProtKB-UniRule"/>
</dbReference>
<dbReference type="FunFam" id="3.30.70.3270:FF:000006">
    <property type="entry name" value="NAD(P)H-quinone oxidoreductase subunit I, chloroplastic"/>
    <property type="match status" value="1"/>
</dbReference>
<dbReference type="Gene3D" id="3.30.70.3270">
    <property type="match status" value="1"/>
</dbReference>
<dbReference type="HAMAP" id="MF_01351">
    <property type="entry name" value="NDH1_NuoI"/>
    <property type="match status" value="1"/>
</dbReference>
<dbReference type="InterPro" id="IPR017896">
    <property type="entry name" value="4Fe4S_Fe-S-bd"/>
</dbReference>
<dbReference type="InterPro" id="IPR017900">
    <property type="entry name" value="4Fe4S_Fe_S_CS"/>
</dbReference>
<dbReference type="InterPro" id="IPR010226">
    <property type="entry name" value="NADH_quinone_OxRdtase_chainI"/>
</dbReference>
<dbReference type="InterPro" id="IPR004497">
    <property type="entry name" value="NDHI"/>
</dbReference>
<dbReference type="NCBIfam" id="TIGR00403">
    <property type="entry name" value="ndhI"/>
    <property type="match status" value="1"/>
</dbReference>
<dbReference type="NCBIfam" id="TIGR01971">
    <property type="entry name" value="NuoI"/>
    <property type="match status" value="1"/>
</dbReference>
<dbReference type="NCBIfam" id="NF004537">
    <property type="entry name" value="PRK05888.1-3"/>
    <property type="match status" value="1"/>
</dbReference>
<dbReference type="PANTHER" id="PTHR47275">
    <property type="entry name" value="NAD(P)H-QUINONE OXIDOREDUCTASE SUBUNIT I, CHLOROPLASTIC"/>
    <property type="match status" value="1"/>
</dbReference>
<dbReference type="PANTHER" id="PTHR47275:SF1">
    <property type="entry name" value="NAD(P)H-QUINONE OXIDOREDUCTASE SUBUNIT I, CHLOROPLASTIC"/>
    <property type="match status" value="1"/>
</dbReference>
<dbReference type="Pfam" id="PF00037">
    <property type="entry name" value="Fer4"/>
    <property type="match status" value="2"/>
</dbReference>
<dbReference type="SUPFAM" id="SSF54862">
    <property type="entry name" value="4Fe-4S ferredoxins"/>
    <property type="match status" value="1"/>
</dbReference>
<dbReference type="PROSITE" id="PS00198">
    <property type="entry name" value="4FE4S_FER_1"/>
    <property type="match status" value="2"/>
</dbReference>
<dbReference type="PROSITE" id="PS51379">
    <property type="entry name" value="4FE4S_FER_2"/>
    <property type="match status" value="2"/>
</dbReference>
<name>NDHI_PENBT</name>
<protein>
    <recommendedName>
        <fullName evidence="1">NAD(P)H-quinone oxidoreductase subunit I, chloroplastic</fullName>
        <ecNumber evidence="1">7.1.1.-</ecNumber>
    </recommendedName>
    <alternativeName>
        <fullName evidence="1">NAD(P)H dehydrogenase subunit I</fullName>
        <shortName evidence="1">NDH subunit I</shortName>
    </alternativeName>
    <alternativeName>
        <fullName evidence="1">NADH-plastoquinone oxidoreductase subunit I</fullName>
    </alternativeName>
</protein>
<feature type="chain" id="PRO_0000250803" description="NAD(P)H-quinone oxidoreductase subunit I, chloroplastic">
    <location>
        <begin position="1"/>
        <end position="166"/>
    </location>
</feature>
<feature type="domain" description="4Fe-4S ferredoxin-type 1" evidence="1">
    <location>
        <begin position="55"/>
        <end position="84"/>
    </location>
</feature>
<feature type="domain" description="4Fe-4S ferredoxin-type 2" evidence="1">
    <location>
        <begin position="95"/>
        <end position="124"/>
    </location>
</feature>
<feature type="binding site" evidence="1">
    <location>
        <position position="64"/>
    </location>
    <ligand>
        <name>[4Fe-4S] cluster</name>
        <dbReference type="ChEBI" id="CHEBI:49883"/>
        <label>1</label>
    </ligand>
</feature>
<feature type="binding site" evidence="1">
    <location>
        <position position="67"/>
    </location>
    <ligand>
        <name>[4Fe-4S] cluster</name>
        <dbReference type="ChEBI" id="CHEBI:49883"/>
        <label>1</label>
    </ligand>
</feature>
<feature type="binding site" evidence="1">
    <location>
        <position position="70"/>
    </location>
    <ligand>
        <name>[4Fe-4S] cluster</name>
        <dbReference type="ChEBI" id="CHEBI:49883"/>
        <label>1</label>
    </ligand>
</feature>
<feature type="binding site" evidence="1">
    <location>
        <position position="74"/>
    </location>
    <ligand>
        <name>[4Fe-4S] cluster</name>
        <dbReference type="ChEBI" id="CHEBI:49883"/>
        <label>2</label>
    </ligand>
</feature>
<feature type="binding site" evidence="1">
    <location>
        <position position="104"/>
    </location>
    <ligand>
        <name>[4Fe-4S] cluster</name>
        <dbReference type="ChEBI" id="CHEBI:49883"/>
        <label>2</label>
    </ligand>
</feature>
<feature type="binding site" evidence="1">
    <location>
        <position position="107"/>
    </location>
    <ligand>
        <name>[4Fe-4S] cluster</name>
        <dbReference type="ChEBI" id="CHEBI:49883"/>
        <label>2</label>
    </ligand>
</feature>
<feature type="binding site" evidence="1">
    <location>
        <position position="110"/>
    </location>
    <ligand>
        <name>[4Fe-4S] cluster</name>
        <dbReference type="ChEBI" id="CHEBI:49883"/>
        <label>2</label>
    </ligand>
</feature>
<feature type="binding site" evidence="1">
    <location>
        <position position="114"/>
    </location>
    <ligand>
        <name>[4Fe-4S] cluster</name>
        <dbReference type="ChEBI" id="CHEBI:49883"/>
        <label>1</label>
    </ligand>
</feature>
<gene>
    <name evidence="1" type="primary">ndhI</name>
</gene>
<keyword id="KW-0004">4Fe-4S</keyword>
<keyword id="KW-0150">Chloroplast</keyword>
<keyword id="KW-0408">Iron</keyword>
<keyword id="KW-0411">Iron-sulfur</keyword>
<keyword id="KW-0472">Membrane</keyword>
<keyword id="KW-0479">Metal-binding</keyword>
<keyword id="KW-0520">NAD</keyword>
<keyword id="KW-0521">NADP</keyword>
<keyword id="KW-0934">Plastid</keyword>
<keyword id="KW-0618">Plastoquinone</keyword>
<keyword id="KW-0874">Quinone</keyword>
<keyword id="KW-0677">Repeat</keyword>
<keyword id="KW-0793">Thylakoid</keyword>
<keyword id="KW-1278">Translocase</keyword>
<proteinExistence type="inferred from homology"/>
<sequence length="166" mass="19461">MFPMVTEFMNYGQQTVRAARYIGQGFMITLSHANRLPVTIQYPYEKLITSERFRGRIHFEFDKCIACEVCVRVCPIDLPVVDWKLETDIRKKRLLNYSIDFGICIFCGNCVEYCPTNCLSMTEEYELSTYDRHELNYNQIALGRLPMSVIDDYTIRTILNLPEIKT</sequence>
<organism>
    <name type="scientific">Pentanema britannica</name>
    <name type="common">British yellowhead</name>
    <name type="synonym">Inula britannica</name>
    <dbReference type="NCBI Taxonomy" id="119176"/>
    <lineage>
        <taxon>Eukaryota</taxon>
        <taxon>Viridiplantae</taxon>
        <taxon>Streptophyta</taxon>
        <taxon>Embryophyta</taxon>
        <taxon>Tracheophyta</taxon>
        <taxon>Spermatophyta</taxon>
        <taxon>Magnoliopsida</taxon>
        <taxon>eudicotyledons</taxon>
        <taxon>Gunneridae</taxon>
        <taxon>Pentapetalae</taxon>
        <taxon>asterids</taxon>
        <taxon>campanulids</taxon>
        <taxon>Asterales</taxon>
        <taxon>Asteraceae</taxon>
        <taxon>Asteroideae</taxon>
        <taxon>Inuleae</taxon>
        <taxon>Inulinae</taxon>
        <taxon>Pentanema</taxon>
    </lineage>
</organism>
<reference key="1">
    <citation type="submission" date="2003-01" db="EMBL/GenBank/DDBJ databases">
        <title>Chloroplast DNA phylogeny of tribe Heliantheae (Asteraceae).</title>
        <authorList>
            <person name="Panero J.L."/>
            <person name="Baldwin B.G."/>
            <person name="Schilling E.E."/>
            <person name="Clevinger J.A."/>
        </authorList>
    </citation>
    <scope>NUCLEOTIDE SEQUENCE [GENOMIC DNA]</scope>
</reference>